<gene>
    <name type="ordered locus">YLR286W-A</name>
</gene>
<reference key="1">
    <citation type="journal article" date="1997" name="Nature">
        <title>The nucleotide sequence of Saccharomyces cerevisiae chromosome XII.</title>
        <authorList>
            <person name="Johnston M."/>
            <person name="Hillier L.W."/>
            <person name="Riles L."/>
            <person name="Albermann K."/>
            <person name="Andre B."/>
            <person name="Ansorge W."/>
            <person name="Benes V."/>
            <person name="Brueckner M."/>
            <person name="Delius H."/>
            <person name="Dubois E."/>
            <person name="Duesterhoeft A."/>
            <person name="Entian K.-D."/>
            <person name="Floeth M."/>
            <person name="Goffeau A."/>
            <person name="Hebling U."/>
            <person name="Heumann K."/>
            <person name="Heuss-Neitzel D."/>
            <person name="Hilbert H."/>
            <person name="Hilger F."/>
            <person name="Kleine K."/>
            <person name="Koetter P."/>
            <person name="Louis E.J."/>
            <person name="Messenguy F."/>
            <person name="Mewes H.-W."/>
            <person name="Miosga T."/>
            <person name="Moestl D."/>
            <person name="Mueller-Auer S."/>
            <person name="Nentwich U."/>
            <person name="Obermaier B."/>
            <person name="Piravandi E."/>
            <person name="Pohl T.M."/>
            <person name="Portetelle D."/>
            <person name="Purnelle B."/>
            <person name="Rechmann S."/>
            <person name="Rieger M."/>
            <person name="Rinke M."/>
            <person name="Rose M."/>
            <person name="Scharfe M."/>
            <person name="Scherens B."/>
            <person name="Scholler P."/>
            <person name="Schwager C."/>
            <person name="Schwarz S."/>
            <person name="Underwood A.P."/>
            <person name="Urrestarazu L.A."/>
            <person name="Vandenbol M."/>
            <person name="Verhasselt P."/>
            <person name="Vierendeels F."/>
            <person name="Voet M."/>
            <person name="Volckaert G."/>
            <person name="Voss H."/>
            <person name="Wambutt R."/>
            <person name="Wedler E."/>
            <person name="Wedler H."/>
            <person name="Zimmermann F.K."/>
            <person name="Zollner A."/>
            <person name="Hani J."/>
            <person name="Hoheisel J.D."/>
        </authorList>
    </citation>
    <scope>NUCLEOTIDE SEQUENCE [LARGE SCALE GENOMIC DNA]</scope>
    <source>
        <strain>ATCC 204508 / S288c</strain>
    </source>
</reference>
<reference key="2">
    <citation type="journal article" date="2014" name="G3 (Bethesda)">
        <title>The reference genome sequence of Saccharomyces cerevisiae: Then and now.</title>
        <authorList>
            <person name="Engel S.R."/>
            <person name="Dietrich F.S."/>
            <person name="Fisk D.G."/>
            <person name="Binkley G."/>
            <person name="Balakrishnan R."/>
            <person name="Costanzo M.C."/>
            <person name="Dwight S.S."/>
            <person name="Hitz B.C."/>
            <person name="Karra K."/>
            <person name="Nash R.S."/>
            <person name="Weng S."/>
            <person name="Wong E.D."/>
            <person name="Lloyd P."/>
            <person name="Skrzypek M.S."/>
            <person name="Miyasato S.R."/>
            <person name="Simison M."/>
            <person name="Cherry J.M."/>
        </authorList>
    </citation>
    <scope>GENOME REANNOTATION</scope>
    <source>
        <strain>ATCC 204508 / S288c</strain>
    </source>
</reference>
<reference key="3">
    <citation type="journal article" date="2002" name="Nat. Biotechnol.">
        <title>An integrated approach for finding overlooked genes in yeast.</title>
        <authorList>
            <person name="Kumar A."/>
            <person name="Harrison P.M."/>
            <person name="Cheung K.-H."/>
            <person name="Lan N."/>
            <person name="Echols N."/>
            <person name="Bertone P."/>
            <person name="Miller P."/>
            <person name="Gerstein M.B."/>
            <person name="Snyder M."/>
        </authorList>
    </citation>
    <scope>NUCLEOTIDE SEQUENCE [GENOMIC DNA]</scope>
</reference>
<feature type="chain" id="PRO_0000299631" description="Putative uncharacterized protein YLR286W-A">
    <location>
        <begin position="1"/>
        <end position="44"/>
    </location>
</feature>
<accession>Q8TGM4</accession>
<protein>
    <recommendedName>
        <fullName>Putative uncharacterized protein YLR286W-A</fullName>
    </recommendedName>
</protein>
<organism>
    <name type="scientific">Saccharomyces cerevisiae (strain ATCC 204508 / S288c)</name>
    <name type="common">Baker's yeast</name>
    <dbReference type="NCBI Taxonomy" id="559292"/>
    <lineage>
        <taxon>Eukaryota</taxon>
        <taxon>Fungi</taxon>
        <taxon>Dikarya</taxon>
        <taxon>Ascomycota</taxon>
        <taxon>Saccharomycotina</taxon>
        <taxon>Saccharomycetes</taxon>
        <taxon>Saccharomycetales</taxon>
        <taxon>Saccharomycetaceae</taxon>
        <taxon>Saccharomyces</taxon>
    </lineage>
</organism>
<dbReference type="EMBL" id="U17243">
    <property type="status" value="NOT_ANNOTATED_CDS"/>
    <property type="molecule type" value="Genomic_DNA"/>
</dbReference>
<dbReference type="EMBL" id="AF479966">
    <property type="protein sequence ID" value="AAL79279.1"/>
    <property type="molecule type" value="Genomic_DNA"/>
</dbReference>
<dbReference type="STRING" id="4932.YLR286W-A"/>
<dbReference type="PaxDb" id="4932-YLR286W-A"/>
<dbReference type="EnsemblFungi" id="YLR286W-A_mRNA">
    <property type="protein sequence ID" value="YLR286W-A"/>
    <property type="gene ID" value="YLR286W-A"/>
</dbReference>
<dbReference type="AGR" id="SGD:S000028679"/>
<dbReference type="SGD" id="S000028679">
    <property type="gene designation" value="YLR286W-A"/>
</dbReference>
<dbReference type="HOGENOM" id="CLU_3224928_0_0_1"/>
<sequence>MITNGELPISRACNFTFSTGRFTVQFTSRILSIQFFSQCTSCTV</sequence>
<proteinExistence type="uncertain"/>
<comment type="miscellaneous">
    <text evidence="1">Completely overlaps CTS1.</text>
</comment>
<comment type="caution">
    <text evidence="2">Product of a dubious gene prediction unlikely to encode a functional protein. Because of that it is not part of the S.cerevisiae S288c complete/reference proteome set.</text>
</comment>
<name>YL286_YEAST</name>
<evidence type="ECO:0000305" key="1"/>
<evidence type="ECO:0000305" key="2">
    <source>
    </source>
</evidence>